<comment type="function">
    <text evidence="1">Involved in the biosynthesis of ADP-glucose, a building block required for the elongation reactions to produce glycogen. Catalyzes the reaction between ATP and alpha-D-glucose 1-phosphate (G1P) to produce pyrophosphate and ADP-Glc.</text>
</comment>
<comment type="catalytic activity">
    <reaction evidence="1">
        <text>alpha-D-glucose 1-phosphate + ATP + H(+) = ADP-alpha-D-glucose + diphosphate</text>
        <dbReference type="Rhea" id="RHEA:12120"/>
        <dbReference type="ChEBI" id="CHEBI:15378"/>
        <dbReference type="ChEBI" id="CHEBI:30616"/>
        <dbReference type="ChEBI" id="CHEBI:33019"/>
        <dbReference type="ChEBI" id="CHEBI:57498"/>
        <dbReference type="ChEBI" id="CHEBI:58601"/>
        <dbReference type="EC" id="2.7.7.27"/>
    </reaction>
</comment>
<comment type="activity regulation">
    <text evidence="1">Allosterically activated by fructose-1,6-bisphosphate (F16BP) and inhibited by AMP.</text>
</comment>
<comment type="pathway">
    <text evidence="1">Glycan biosynthesis; glycogen biosynthesis.</text>
</comment>
<comment type="subunit">
    <text evidence="1">Homotetramer.</text>
</comment>
<comment type="similarity">
    <text evidence="1">Belongs to the bacterial/plant glucose-1-phosphate adenylyltransferase family.</text>
</comment>
<feature type="chain" id="PRO_1000130481" description="Glucose-1-phosphate adenylyltransferase">
    <location>
        <begin position="1"/>
        <end position="431"/>
    </location>
</feature>
<feature type="binding site" evidence="1">
    <location>
        <position position="39"/>
    </location>
    <ligand>
        <name>beta-D-fructose 1,6-bisphosphate</name>
        <dbReference type="ChEBI" id="CHEBI:32966"/>
    </ligand>
</feature>
<feature type="binding site" evidence="1">
    <location>
        <position position="40"/>
    </location>
    <ligand>
        <name>AMP</name>
        <dbReference type="ChEBI" id="CHEBI:456215"/>
    </ligand>
</feature>
<feature type="binding site" evidence="1">
    <location>
        <position position="46"/>
    </location>
    <ligand>
        <name>AMP</name>
        <dbReference type="ChEBI" id="CHEBI:456215"/>
    </ligand>
</feature>
<feature type="binding site" evidence="1">
    <location>
        <position position="52"/>
    </location>
    <ligand>
        <name>AMP</name>
        <dbReference type="ChEBI" id="CHEBI:456215"/>
    </ligand>
</feature>
<feature type="binding site" evidence="1">
    <location>
        <position position="114"/>
    </location>
    <ligand>
        <name>alpha-D-glucose 1-phosphate</name>
        <dbReference type="ChEBI" id="CHEBI:58601"/>
    </ligand>
</feature>
<feature type="binding site" evidence="1">
    <location>
        <position position="130"/>
    </location>
    <ligand>
        <name>AMP</name>
        <dbReference type="ChEBI" id="CHEBI:456215"/>
    </ligand>
</feature>
<feature type="binding site" evidence="1">
    <location>
        <position position="179"/>
    </location>
    <ligand>
        <name>alpha-D-glucose 1-phosphate</name>
        <dbReference type="ChEBI" id="CHEBI:58601"/>
    </ligand>
</feature>
<feature type="binding site" evidence="1">
    <location>
        <begin position="194"/>
        <end position="195"/>
    </location>
    <ligand>
        <name>alpha-D-glucose 1-phosphate</name>
        <dbReference type="ChEBI" id="CHEBI:58601"/>
    </ligand>
</feature>
<feature type="binding site" evidence="1">
    <location>
        <position position="212"/>
    </location>
    <ligand>
        <name>alpha-D-glucose 1-phosphate</name>
        <dbReference type="ChEBI" id="CHEBI:58601"/>
    </ligand>
</feature>
<feature type="binding site" evidence="1">
    <location>
        <position position="370"/>
    </location>
    <ligand>
        <name>AMP</name>
        <dbReference type="ChEBI" id="CHEBI:456215"/>
    </ligand>
</feature>
<feature type="binding site" evidence="1">
    <location>
        <position position="386"/>
    </location>
    <ligand>
        <name>AMP</name>
        <dbReference type="ChEBI" id="CHEBI:456215"/>
    </ligand>
</feature>
<feature type="binding site" evidence="1">
    <location>
        <begin position="419"/>
        <end position="423"/>
    </location>
    <ligand>
        <name>beta-D-fructose 1,6-bisphosphate</name>
        <dbReference type="ChEBI" id="CHEBI:32966"/>
    </ligand>
</feature>
<feature type="binding site" evidence="1">
    <location>
        <begin position="429"/>
        <end position="431"/>
    </location>
    <ligand>
        <name>beta-D-fructose 1,6-bisphosphate</name>
        <dbReference type="ChEBI" id="CHEBI:32966"/>
    </ligand>
</feature>
<feature type="site" description="Could play a key role in the communication between the regulatory and the substrate sites" evidence="1">
    <location>
        <position position="74"/>
    </location>
</feature>
<feature type="site" description="Could play a key role in the communication between the regulatory and the substrate sites" evidence="1">
    <location>
        <position position="113"/>
    </location>
</feature>
<name>GLGC_ECOSE</name>
<evidence type="ECO:0000255" key="1">
    <source>
        <dbReference type="HAMAP-Rule" id="MF_00624"/>
    </source>
</evidence>
<reference key="1">
    <citation type="journal article" date="2008" name="DNA Res.">
        <title>Complete genome sequence and comparative analysis of the wild-type commensal Escherichia coli strain SE11 isolated from a healthy adult.</title>
        <authorList>
            <person name="Oshima K."/>
            <person name="Toh H."/>
            <person name="Ogura Y."/>
            <person name="Sasamoto H."/>
            <person name="Morita H."/>
            <person name="Park S.-H."/>
            <person name="Ooka T."/>
            <person name="Iyoda S."/>
            <person name="Taylor T.D."/>
            <person name="Hayashi T."/>
            <person name="Itoh K."/>
            <person name="Hattori M."/>
        </authorList>
    </citation>
    <scope>NUCLEOTIDE SEQUENCE [LARGE SCALE GENOMIC DNA]</scope>
    <source>
        <strain>SE11</strain>
    </source>
</reference>
<keyword id="KW-0021">Allosteric enzyme</keyword>
<keyword id="KW-0067">ATP-binding</keyword>
<keyword id="KW-0119">Carbohydrate metabolism</keyword>
<keyword id="KW-0320">Glycogen biosynthesis</keyword>
<keyword id="KW-0321">Glycogen metabolism</keyword>
<keyword id="KW-0547">Nucleotide-binding</keyword>
<keyword id="KW-0548">Nucleotidyltransferase</keyword>
<keyword id="KW-0808">Transferase</keyword>
<dbReference type="EC" id="2.7.7.27" evidence="1"/>
<dbReference type="EMBL" id="AP009240">
    <property type="protein sequence ID" value="BAG79223.1"/>
    <property type="molecule type" value="Genomic_DNA"/>
</dbReference>
<dbReference type="RefSeq" id="WP_000253975.1">
    <property type="nucleotide sequence ID" value="NC_011415.1"/>
</dbReference>
<dbReference type="SMR" id="B6I2Z6"/>
<dbReference type="GeneID" id="93778559"/>
<dbReference type="KEGG" id="ecy:ECSE_3699"/>
<dbReference type="HOGENOM" id="CLU_029499_14_1_6"/>
<dbReference type="UniPathway" id="UPA00164"/>
<dbReference type="Proteomes" id="UP000008199">
    <property type="component" value="Chromosome"/>
</dbReference>
<dbReference type="GO" id="GO:0005524">
    <property type="term" value="F:ATP binding"/>
    <property type="evidence" value="ECO:0007669"/>
    <property type="project" value="UniProtKB-KW"/>
</dbReference>
<dbReference type="GO" id="GO:0008878">
    <property type="term" value="F:glucose-1-phosphate adenylyltransferase activity"/>
    <property type="evidence" value="ECO:0007669"/>
    <property type="project" value="UniProtKB-UniRule"/>
</dbReference>
<dbReference type="GO" id="GO:0005978">
    <property type="term" value="P:glycogen biosynthetic process"/>
    <property type="evidence" value="ECO:0007669"/>
    <property type="project" value="UniProtKB-UniRule"/>
</dbReference>
<dbReference type="CDD" id="cd02508">
    <property type="entry name" value="ADP_Glucose_PP"/>
    <property type="match status" value="1"/>
</dbReference>
<dbReference type="CDD" id="cd04651">
    <property type="entry name" value="LbH_G1P_AT_C"/>
    <property type="match status" value="1"/>
</dbReference>
<dbReference type="FunFam" id="2.160.10.10:FF:000006">
    <property type="entry name" value="Glucose-1-phosphate adenylyltransferase"/>
    <property type="match status" value="1"/>
</dbReference>
<dbReference type="FunFam" id="3.90.550.10:FF:000014">
    <property type="entry name" value="Glucose-1-phosphate adenylyltransferase"/>
    <property type="match status" value="1"/>
</dbReference>
<dbReference type="Gene3D" id="2.160.10.10">
    <property type="entry name" value="Hexapeptide repeat proteins"/>
    <property type="match status" value="1"/>
</dbReference>
<dbReference type="Gene3D" id="3.90.550.10">
    <property type="entry name" value="Spore Coat Polysaccharide Biosynthesis Protein SpsA, Chain A"/>
    <property type="match status" value="1"/>
</dbReference>
<dbReference type="HAMAP" id="MF_00624">
    <property type="entry name" value="GlgC"/>
    <property type="match status" value="1"/>
</dbReference>
<dbReference type="InterPro" id="IPR011831">
    <property type="entry name" value="ADP-Glc_PPase"/>
</dbReference>
<dbReference type="InterPro" id="IPR005836">
    <property type="entry name" value="ADP_Glu_pyroP_CS"/>
</dbReference>
<dbReference type="InterPro" id="IPR023049">
    <property type="entry name" value="GlgC_bac"/>
</dbReference>
<dbReference type="InterPro" id="IPR056818">
    <property type="entry name" value="GlmU/GlgC-like_hexapep"/>
</dbReference>
<dbReference type="InterPro" id="IPR005835">
    <property type="entry name" value="NTP_transferase_dom"/>
</dbReference>
<dbReference type="InterPro" id="IPR029044">
    <property type="entry name" value="Nucleotide-diphossugar_trans"/>
</dbReference>
<dbReference type="InterPro" id="IPR011004">
    <property type="entry name" value="Trimer_LpxA-like_sf"/>
</dbReference>
<dbReference type="NCBIfam" id="TIGR02091">
    <property type="entry name" value="glgC"/>
    <property type="match status" value="1"/>
</dbReference>
<dbReference type="NCBIfam" id="NF001947">
    <property type="entry name" value="PRK00725.1"/>
    <property type="match status" value="1"/>
</dbReference>
<dbReference type="NCBIfam" id="NF002023">
    <property type="entry name" value="PRK00844.1"/>
    <property type="match status" value="1"/>
</dbReference>
<dbReference type="PANTHER" id="PTHR43523:SF2">
    <property type="entry name" value="GLUCOSE-1-PHOSPHATE ADENYLYLTRANSFERASE"/>
    <property type="match status" value="1"/>
</dbReference>
<dbReference type="PANTHER" id="PTHR43523">
    <property type="entry name" value="GLUCOSE-1-PHOSPHATE ADENYLYLTRANSFERASE-RELATED"/>
    <property type="match status" value="1"/>
</dbReference>
<dbReference type="Pfam" id="PF24894">
    <property type="entry name" value="Hexapep_GlmU"/>
    <property type="match status" value="1"/>
</dbReference>
<dbReference type="Pfam" id="PF00483">
    <property type="entry name" value="NTP_transferase"/>
    <property type="match status" value="1"/>
</dbReference>
<dbReference type="SUPFAM" id="SSF53448">
    <property type="entry name" value="Nucleotide-diphospho-sugar transferases"/>
    <property type="match status" value="1"/>
</dbReference>
<dbReference type="SUPFAM" id="SSF51161">
    <property type="entry name" value="Trimeric LpxA-like enzymes"/>
    <property type="match status" value="1"/>
</dbReference>
<dbReference type="PROSITE" id="PS00808">
    <property type="entry name" value="ADP_GLC_PYROPHOSPH_1"/>
    <property type="match status" value="1"/>
</dbReference>
<dbReference type="PROSITE" id="PS00809">
    <property type="entry name" value="ADP_GLC_PYROPHOSPH_2"/>
    <property type="match status" value="1"/>
</dbReference>
<dbReference type="PROSITE" id="PS00810">
    <property type="entry name" value="ADP_GLC_PYROPHOSPH_3"/>
    <property type="match status" value="1"/>
</dbReference>
<sequence>MVSLEKNDHLMLARQLPLKSVALILAGGRGTRLKDLTNKRAKPAVHFGGKFRIIDFALSNCINSGIRRMGVITQYQSHTLVQHIQRGWSFFNEEMNEFVDLLPAQQRMKGENWYRGTADAVTQNLDIIRRYKAEYVVILAGDHIYKQDYSRMLIDHVEKGARCTVACMPVPIEEASAFGVMAVDENDKIIEFVEKPANPPSMPNDPSKSLASMGIYVFDADYLYELLEEDDRDENSSHDFGKDLIPKITEAGLAYAHPFPLSCVQSDPDAEPYWRDVGTLEAYWKANLDLASVVPELDMYDRNWPIRTYNESLPPAKFVQDRSGSHGMTLNSLVSGGCVISGSVVVQSVLFSRVRVNSFCNIDSAVLLPEVWVGRSCRLRRCVIDRACVIPEGMVIGENAEEDARRFYRSEEGIVLVTREMLRKLGHKQER</sequence>
<organism>
    <name type="scientific">Escherichia coli (strain SE11)</name>
    <dbReference type="NCBI Taxonomy" id="409438"/>
    <lineage>
        <taxon>Bacteria</taxon>
        <taxon>Pseudomonadati</taxon>
        <taxon>Pseudomonadota</taxon>
        <taxon>Gammaproteobacteria</taxon>
        <taxon>Enterobacterales</taxon>
        <taxon>Enterobacteriaceae</taxon>
        <taxon>Escherichia</taxon>
    </lineage>
</organism>
<protein>
    <recommendedName>
        <fullName evidence="1">Glucose-1-phosphate adenylyltransferase</fullName>
        <ecNumber evidence="1">2.7.7.27</ecNumber>
    </recommendedName>
    <alternativeName>
        <fullName evidence="1">ADP-glucose pyrophosphorylase</fullName>
        <shortName evidence="1">ADPGlc PPase</shortName>
    </alternativeName>
    <alternativeName>
        <fullName evidence="1">ADP-glucose synthase</fullName>
    </alternativeName>
</protein>
<gene>
    <name evidence="1" type="primary">glgC</name>
    <name type="ordered locus">ECSE_3699</name>
</gene>
<accession>B6I2Z6</accession>
<proteinExistence type="inferred from homology"/>